<organism>
    <name type="scientific">Streptococcus pneumoniae (strain ATCC BAA-255 / R6)</name>
    <dbReference type="NCBI Taxonomy" id="171101"/>
    <lineage>
        <taxon>Bacteria</taxon>
        <taxon>Bacillati</taxon>
        <taxon>Bacillota</taxon>
        <taxon>Bacilli</taxon>
        <taxon>Lactobacillales</taxon>
        <taxon>Streptococcaceae</taxon>
        <taxon>Streptococcus</taxon>
    </lineage>
</organism>
<reference key="1">
    <citation type="journal article" date="2001" name="J. Bacteriol.">
        <title>Genome of the bacterium Streptococcus pneumoniae strain R6.</title>
        <authorList>
            <person name="Hoskins J."/>
            <person name="Alborn W.E. Jr."/>
            <person name="Arnold J."/>
            <person name="Blaszczak L.C."/>
            <person name="Burgett S."/>
            <person name="DeHoff B.S."/>
            <person name="Estrem S.T."/>
            <person name="Fritz L."/>
            <person name="Fu D.-J."/>
            <person name="Fuller W."/>
            <person name="Geringer C."/>
            <person name="Gilmour R."/>
            <person name="Glass J.S."/>
            <person name="Khoja H."/>
            <person name="Kraft A.R."/>
            <person name="Lagace R.E."/>
            <person name="LeBlanc D.J."/>
            <person name="Lee L.N."/>
            <person name="Lefkowitz E.J."/>
            <person name="Lu J."/>
            <person name="Matsushima P."/>
            <person name="McAhren S.M."/>
            <person name="McHenney M."/>
            <person name="McLeaster K."/>
            <person name="Mundy C.W."/>
            <person name="Nicas T.I."/>
            <person name="Norris F.H."/>
            <person name="O'Gara M."/>
            <person name="Peery R.B."/>
            <person name="Robertson G.T."/>
            <person name="Rockey P."/>
            <person name="Sun P.-M."/>
            <person name="Winkler M.E."/>
            <person name="Yang Y."/>
            <person name="Young-Bellido M."/>
            <person name="Zhao G."/>
            <person name="Zook C.A."/>
            <person name="Baltz R.H."/>
            <person name="Jaskunas S.R."/>
            <person name="Rosteck P.R. Jr."/>
            <person name="Skatrud P.L."/>
            <person name="Glass J.I."/>
        </authorList>
    </citation>
    <scope>NUCLEOTIDE SEQUENCE [LARGE SCALE GENOMIC DNA]</scope>
    <source>
        <strain>ATCC BAA-255 / R6</strain>
    </source>
</reference>
<sequence length="193" mass="21106">MKIGILALQGAFAEHAKVLDQLGVESVELRNLDDFQQDQSDLSGLILPGGESTTMGKLLRDQNMLLPIREAILSGLPVFGTCAGLILLAKEITSQKESHLGTMDMVVERNAYGRQLGSFYTEAECKGVGKIPMTFIRGPIISSVGEGVEILAIVNNQIVAAQEKNMLVSSFHPELTDDVRLHQYFINMCKEKS</sequence>
<comment type="function">
    <text evidence="1">Catalyzes the hydrolysis of glutamine to glutamate and ammonia as part of the biosynthesis of pyridoxal 5'-phosphate. The resulting ammonia molecule is channeled to the active site of PdxS.</text>
</comment>
<comment type="catalytic activity">
    <reaction evidence="1">
        <text>aldehydo-D-ribose 5-phosphate + D-glyceraldehyde 3-phosphate + L-glutamine = pyridoxal 5'-phosphate + L-glutamate + phosphate + 3 H2O + H(+)</text>
        <dbReference type="Rhea" id="RHEA:31507"/>
        <dbReference type="ChEBI" id="CHEBI:15377"/>
        <dbReference type="ChEBI" id="CHEBI:15378"/>
        <dbReference type="ChEBI" id="CHEBI:29985"/>
        <dbReference type="ChEBI" id="CHEBI:43474"/>
        <dbReference type="ChEBI" id="CHEBI:58273"/>
        <dbReference type="ChEBI" id="CHEBI:58359"/>
        <dbReference type="ChEBI" id="CHEBI:59776"/>
        <dbReference type="ChEBI" id="CHEBI:597326"/>
        <dbReference type="EC" id="4.3.3.6"/>
    </reaction>
</comment>
<comment type="catalytic activity">
    <reaction evidence="1">
        <text>L-glutamine + H2O = L-glutamate + NH4(+)</text>
        <dbReference type="Rhea" id="RHEA:15889"/>
        <dbReference type="ChEBI" id="CHEBI:15377"/>
        <dbReference type="ChEBI" id="CHEBI:28938"/>
        <dbReference type="ChEBI" id="CHEBI:29985"/>
        <dbReference type="ChEBI" id="CHEBI:58359"/>
        <dbReference type="EC" id="3.5.1.2"/>
    </reaction>
</comment>
<comment type="pathway">
    <text evidence="1">Cofactor biosynthesis; pyridoxal 5'-phosphate biosynthesis.</text>
</comment>
<comment type="subunit">
    <text evidence="1">In the presence of PdxS, forms a dodecamer of heterodimers. Only shows activity in the heterodimer.</text>
</comment>
<comment type="similarity">
    <text evidence="1">Belongs to the glutaminase PdxT/SNO family.</text>
</comment>
<name>PDXT_STRR6</name>
<feature type="chain" id="PRO_0000135668" description="Pyridoxal 5'-phosphate synthase subunit PdxT">
    <location>
        <begin position="1"/>
        <end position="193"/>
    </location>
</feature>
<feature type="active site" description="Nucleophile" evidence="1">
    <location>
        <position position="82"/>
    </location>
</feature>
<feature type="active site" description="Charge relay system" evidence="1">
    <location>
        <position position="172"/>
    </location>
</feature>
<feature type="active site" description="Charge relay system" evidence="1">
    <location>
        <position position="174"/>
    </location>
</feature>
<feature type="binding site" evidence="1">
    <location>
        <begin position="50"/>
        <end position="52"/>
    </location>
    <ligand>
        <name>L-glutamine</name>
        <dbReference type="ChEBI" id="CHEBI:58359"/>
    </ligand>
</feature>
<feature type="binding site" evidence="1">
    <location>
        <position position="109"/>
    </location>
    <ligand>
        <name>L-glutamine</name>
        <dbReference type="ChEBI" id="CHEBI:58359"/>
    </ligand>
</feature>
<feature type="binding site" evidence="1">
    <location>
        <begin position="136"/>
        <end position="137"/>
    </location>
    <ligand>
        <name>L-glutamine</name>
        <dbReference type="ChEBI" id="CHEBI:58359"/>
    </ligand>
</feature>
<protein>
    <recommendedName>
        <fullName evidence="1">Pyridoxal 5'-phosphate synthase subunit PdxT</fullName>
        <ecNumber evidence="1">4.3.3.6</ecNumber>
    </recommendedName>
    <alternativeName>
        <fullName evidence="1">Pdx2</fullName>
    </alternativeName>
    <alternativeName>
        <fullName evidence="1">Pyridoxal 5'-phosphate synthase glutaminase subunit</fullName>
        <ecNumber evidence="1">3.5.1.2</ecNumber>
    </alternativeName>
</protein>
<proteinExistence type="inferred from homology"/>
<evidence type="ECO:0000255" key="1">
    <source>
        <dbReference type="HAMAP-Rule" id="MF_01615"/>
    </source>
</evidence>
<dbReference type="EC" id="4.3.3.6" evidence="1"/>
<dbReference type="EC" id="3.5.1.2" evidence="1"/>
<dbReference type="EMBL" id="AE007317">
    <property type="protein sequence ID" value="AAL00125.1"/>
    <property type="molecule type" value="Genomic_DNA"/>
</dbReference>
<dbReference type="PIR" id="H98036">
    <property type="entry name" value="H98036"/>
</dbReference>
<dbReference type="RefSeq" id="NP_358914.1">
    <property type="nucleotide sequence ID" value="NC_003098.1"/>
</dbReference>
<dbReference type="RefSeq" id="WP_000689943.1">
    <property type="nucleotide sequence ID" value="NC_003098.1"/>
</dbReference>
<dbReference type="SMR" id="Q8DP72"/>
<dbReference type="STRING" id="171101.spr1321"/>
<dbReference type="KEGG" id="spr:spr1321"/>
<dbReference type="PATRIC" id="fig|171101.6.peg.1433"/>
<dbReference type="eggNOG" id="COG0311">
    <property type="taxonomic scope" value="Bacteria"/>
</dbReference>
<dbReference type="HOGENOM" id="CLU_069674_2_0_9"/>
<dbReference type="UniPathway" id="UPA00245"/>
<dbReference type="Proteomes" id="UP000000586">
    <property type="component" value="Chromosome"/>
</dbReference>
<dbReference type="GO" id="GO:0005829">
    <property type="term" value="C:cytosol"/>
    <property type="evidence" value="ECO:0000318"/>
    <property type="project" value="GO_Central"/>
</dbReference>
<dbReference type="GO" id="GO:1903600">
    <property type="term" value="C:glutaminase complex"/>
    <property type="evidence" value="ECO:0000318"/>
    <property type="project" value="GO_Central"/>
</dbReference>
<dbReference type="GO" id="GO:0004359">
    <property type="term" value="F:glutaminase activity"/>
    <property type="evidence" value="ECO:0007669"/>
    <property type="project" value="UniProtKB-UniRule"/>
</dbReference>
<dbReference type="GO" id="GO:0036381">
    <property type="term" value="F:pyridoxal 5'-phosphate synthase (glutamine hydrolysing) activity"/>
    <property type="evidence" value="ECO:0007669"/>
    <property type="project" value="UniProtKB-UniRule"/>
</dbReference>
<dbReference type="GO" id="GO:0006543">
    <property type="term" value="P:glutamine catabolic process"/>
    <property type="evidence" value="ECO:0007669"/>
    <property type="project" value="UniProtKB-UniRule"/>
</dbReference>
<dbReference type="GO" id="GO:0042823">
    <property type="term" value="P:pyridoxal phosphate biosynthetic process"/>
    <property type="evidence" value="ECO:0000318"/>
    <property type="project" value="GO_Central"/>
</dbReference>
<dbReference type="GO" id="GO:0008614">
    <property type="term" value="P:pyridoxine metabolic process"/>
    <property type="evidence" value="ECO:0000318"/>
    <property type="project" value="GO_Central"/>
</dbReference>
<dbReference type="CDD" id="cd01749">
    <property type="entry name" value="GATase1_PB"/>
    <property type="match status" value="1"/>
</dbReference>
<dbReference type="FunFam" id="3.40.50.880:FF:000010">
    <property type="entry name" value="uncharacterized protein LOC100176842 isoform X2"/>
    <property type="match status" value="1"/>
</dbReference>
<dbReference type="Gene3D" id="3.40.50.880">
    <property type="match status" value="1"/>
</dbReference>
<dbReference type="HAMAP" id="MF_01615">
    <property type="entry name" value="PdxT"/>
    <property type="match status" value="1"/>
</dbReference>
<dbReference type="InterPro" id="IPR029062">
    <property type="entry name" value="Class_I_gatase-like"/>
</dbReference>
<dbReference type="InterPro" id="IPR002161">
    <property type="entry name" value="PdxT/SNO"/>
</dbReference>
<dbReference type="InterPro" id="IPR021196">
    <property type="entry name" value="PdxT/SNO_CS"/>
</dbReference>
<dbReference type="NCBIfam" id="TIGR03800">
    <property type="entry name" value="PLP_synth_Pdx2"/>
    <property type="match status" value="1"/>
</dbReference>
<dbReference type="PANTHER" id="PTHR31559">
    <property type="entry name" value="PYRIDOXAL 5'-PHOSPHATE SYNTHASE SUBUNIT SNO"/>
    <property type="match status" value="1"/>
</dbReference>
<dbReference type="PANTHER" id="PTHR31559:SF0">
    <property type="entry name" value="PYRIDOXAL 5'-PHOSPHATE SYNTHASE SUBUNIT SNO1-RELATED"/>
    <property type="match status" value="1"/>
</dbReference>
<dbReference type="Pfam" id="PF01174">
    <property type="entry name" value="SNO"/>
    <property type="match status" value="1"/>
</dbReference>
<dbReference type="PIRSF" id="PIRSF005639">
    <property type="entry name" value="Glut_amidoT_SNO"/>
    <property type="match status" value="1"/>
</dbReference>
<dbReference type="SUPFAM" id="SSF52317">
    <property type="entry name" value="Class I glutamine amidotransferase-like"/>
    <property type="match status" value="1"/>
</dbReference>
<dbReference type="PROSITE" id="PS01236">
    <property type="entry name" value="PDXT_SNO_1"/>
    <property type="match status" value="1"/>
</dbReference>
<dbReference type="PROSITE" id="PS51130">
    <property type="entry name" value="PDXT_SNO_2"/>
    <property type="match status" value="1"/>
</dbReference>
<accession>Q8DP72</accession>
<keyword id="KW-0315">Glutamine amidotransferase</keyword>
<keyword id="KW-0378">Hydrolase</keyword>
<keyword id="KW-0456">Lyase</keyword>
<keyword id="KW-0663">Pyridoxal phosphate</keyword>
<keyword id="KW-1185">Reference proteome</keyword>
<gene>
    <name evidence="1" type="primary">pdxT</name>
    <name type="ordered locus">spr1321</name>
</gene>